<reference key="1">
    <citation type="journal article" date="1993" name="J. Bacteriol.">
        <title>An oxygen-dependent coproporphyrinogen oxidase encoded by the hemF gene of Salmonella typhimurium.</title>
        <authorList>
            <person name="Xu K."/>
            <person name="Elliott T."/>
        </authorList>
    </citation>
    <scope>NUCLEOTIDE SEQUENCE [GENOMIC DNA]</scope>
    <source>
        <strain>LT2</strain>
    </source>
</reference>
<reference key="2">
    <citation type="journal article" date="2001" name="Nature">
        <title>Complete genome sequence of Salmonella enterica serovar Typhimurium LT2.</title>
        <authorList>
            <person name="McClelland M."/>
            <person name="Sanderson K.E."/>
            <person name="Spieth J."/>
            <person name="Clifton S.W."/>
            <person name="Latreille P."/>
            <person name="Courtney L."/>
            <person name="Porwollik S."/>
            <person name="Ali J."/>
            <person name="Dante M."/>
            <person name="Du F."/>
            <person name="Hou S."/>
            <person name="Layman D."/>
            <person name="Leonard S."/>
            <person name="Nguyen C."/>
            <person name="Scott K."/>
            <person name="Holmes A."/>
            <person name="Grewal N."/>
            <person name="Mulvaney E."/>
            <person name="Ryan E."/>
            <person name="Sun H."/>
            <person name="Florea L."/>
            <person name="Miller W."/>
            <person name="Stoneking T."/>
            <person name="Nhan M."/>
            <person name="Waterston R."/>
            <person name="Wilson R.K."/>
        </authorList>
    </citation>
    <scope>NUCLEOTIDE SEQUENCE [LARGE SCALE GENOMIC DNA]</scope>
    <source>
        <strain>LT2 / SGSC1412 / ATCC 700720</strain>
    </source>
</reference>
<name>AMIA_SALTY</name>
<evidence type="ECO:0000250" key="1"/>
<evidence type="ECO:0000255" key="2"/>
<evidence type="ECO:0000256" key="3">
    <source>
        <dbReference type="SAM" id="MobiDB-lite"/>
    </source>
</evidence>
<evidence type="ECO:0000305" key="4"/>
<proteinExistence type="inferred from homology"/>
<feature type="signal peptide" description="Tat-type signal" evidence="2">
    <location>
        <begin position="1"/>
        <end position="34"/>
    </location>
</feature>
<feature type="chain" id="PRO_0000006461" description="N-acetylmuramoyl-L-alanine amidase AmiA">
    <location>
        <begin position="35"/>
        <end position="289"/>
    </location>
</feature>
<feature type="domain" description="MurNAc-LAA" evidence="2">
    <location>
        <begin position="59"/>
        <end position="273"/>
    </location>
</feature>
<feature type="region of interest" description="Disordered" evidence="3">
    <location>
        <begin position="36"/>
        <end position="61"/>
    </location>
</feature>
<feature type="compositionally biased region" description="Basic residues" evidence="3">
    <location>
        <begin position="46"/>
        <end position="55"/>
    </location>
</feature>
<protein>
    <recommendedName>
        <fullName>N-acetylmuramoyl-L-alanine amidase AmiA</fullName>
        <ecNumber>3.5.1.28</ecNumber>
    </recommendedName>
</protein>
<gene>
    <name type="primary">amiA</name>
    <name type="ordered locus">STM2450</name>
</gene>
<dbReference type="EC" id="3.5.1.28"/>
<dbReference type="EMBL" id="L19503">
    <property type="protein sequence ID" value="AAA27138.1"/>
    <property type="molecule type" value="Genomic_DNA"/>
</dbReference>
<dbReference type="EMBL" id="AE006468">
    <property type="protein sequence ID" value="AAL21344.1"/>
    <property type="molecule type" value="Genomic_DNA"/>
</dbReference>
<dbReference type="PIR" id="A53302">
    <property type="entry name" value="A53302"/>
</dbReference>
<dbReference type="RefSeq" id="NP_461385.1">
    <property type="nucleotide sequence ID" value="NC_003197.2"/>
</dbReference>
<dbReference type="RefSeq" id="WP_000102881.1">
    <property type="nucleotide sequence ID" value="NC_003197.2"/>
</dbReference>
<dbReference type="SMR" id="P33772"/>
<dbReference type="STRING" id="99287.STM2450"/>
<dbReference type="PaxDb" id="99287-STM2450"/>
<dbReference type="GeneID" id="1253972"/>
<dbReference type="KEGG" id="stm:STM2450"/>
<dbReference type="PATRIC" id="fig|99287.12.peg.2588"/>
<dbReference type="HOGENOM" id="CLU_014322_4_1_6"/>
<dbReference type="OMA" id="QIRPVHH"/>
<dbReference type="PhylomeDB" id="P33772"/>
<dbReference type="BioCyc" id="SENT99287:STM2450-MONOMER"/>
<dbReference type="PHI-base" id="PHI:8728"/>
<dbReference type="Proteomes" id="UP000001014">
    <property type="component" value="Chromosome"/>
</dbReference>
<dbReference type="GO" id="GO:0030288">
    <property type="term" value="C:outer membrane-bounded periplasmic space"/>
    <property type="evidence" value="ECO:0000318"/>
    <property type="project" value="GO_Central"/>
</dbReference>
<dbReference type="GO" id="GO:0008745">
    <property type="term" value="F:N-acetylmuramoyl-L-alanine amidase activity"/>
    <property type="evidence" value="ECO:0000318"/>
    <property type="project" value="GO_Central"/>
</dbReference>
<dbReference type="GO" id="GO:0071555">
    <property type="term" value="P:cell wall organization"/>
    <property type="evidence" value="ECO:0007669"/>
    <property type="project" value="UniProtKB-KW"/>
</dbReference>
<dbReference type="GO" id="GO:0043093">
    <property type="term" value="P:FtsZ-dependent cytokinesis"/>
    <property type="evidence" value="ECO:0000318"/>
    <property type="project" value="GO_Central"/>
</dbReference>
<dbReference type="GO" id="GO:0009253">
    <property type="term" value="P:peptidoglycan catabolic process"/>
    <property type="evidence" value="ECO:0007669"/>
    <property type="project" value="InterPro"/>
</dbReference>
<dbReference type="CDD" id="cd02696">
    <property type="entry name" value="MurNAc-LAA"/>
    <property type="match status" value="1"/>
</dbReference>
<dbReference type="FunFam" id="3.40.630.40:FF:000002">
    <property type="entry name" value="N-acetylmuramoyl-L-alanine amidase AmiA"/>
    <property type="match status" value="1"/>
</dbReference>
<dbReference type="Gene3D" id="3.40.630.40">
    <property type="entry name" value="Zn-dependent exopeptidases"/>
    <property type="match status" value="1"/>
</dbReference>
<dbReference type="InterPro" id="IPR002508">
    <property type="entry name" value="MurNAc-LAA_cat"/>
</dbReference>
<dbReference type="InterPro" id="IPR050695">
    <property type="entry name" value="N-acetylmuramoyl_amidase_3"/>
</dbReference>
<dbReference type="NCBIfam" id="NF007652">
    <property type="entry name" value="PRK10319.1"/>
    <property type="match status" value="1"/>
</dbReference>
<dbReference type="PANTHER" id="PTHR30404">
    <property type="entry name" value="N-ACETYLMURAMOYL-L-ALANINE AMIDASE"/>
    <property type="match status" value="1"/>
</dbReference>
<dbReference type="PANTHER" id="PTHR30404:SF2">
    <property type="entry name" value="N-ACETYLMURAMOYL-L-ALANINE AMIDASE AMIA"/>
    <property type="match status" value="1"/>
</dbReference>
<dbReference type="Pfam" id="PF01520">
    <property type="entry name" value="Amidase_3"/>
    <property type="match status" value="1"/>
</dbReference>
<dbReference type="SMART" id="SM00646">
    <property type="entry name" value="Ami_3"/>
    <property type="match status" value="1"/>
</dbReference>
<dbReference type="SUPFAM" id="SSF53187">
    <property type="entry name" value="Zn-dependent exopeptidases"/>
    <property type="match status" value="1"/>
</dbReference>
<sequence length="289" mass="31659">MSTFKLLKTLTSRRQVLKTGLAALTLSGMSHAVAKEETLKTSNGHSKPKTKKTGSKRLVMLDPGHGGIDTGAIGRNGSQEKHVVLAIAKNVRAILRNHGIDARLTRTGDTFIPLYDRVEIAHKHGADLFMSIHADGFTNPKAAGASVFALSNRGASSAMAKYLSERENRADEVAGKKATDRDHLLQQVLFDLVQTDTIKNSLTLGSHILKKIKPIHKLHSRTTEQAAFVVLKSPSIPSVLVETSFITNPEEERLLGTTAFRQKIATAIANGIISYFHWFDNQKAHTKKR</sequence>
<organism>
    <name type="scientific">Salmonella typhimurium (strain LT2 / SGSC1412 / ATCC 700720)</name>
    <dbReference type="NCBI Taxonomy" id="99287"/>
    <lineage>
        <taxon>Bacteria</taxon>
        <taxon>Pseudomonadati</taxon>
        <taxon>Pseudomonadota</taxon>
        <taxon>Gammaproteobacteria</taxon>
        <taxon>Enterobacterales</taxon>
        <taxon>Enterobacteriaceae</taxon>
        <taxon>Salmonella</taxon>
    </lineage>
</organism>
<comment type="function">
    <text evidence="1">Cell-wall hydrolase involved in septum cleavage during cell division.</text>
</comment>
<comment type="catalytic activity">
    <reaction>
        <text>Hydrolyzes the link between N-acetylmuramoyl residues and L-amino acid residues in certain cell-wall glycopeptides.</text>
        <dbReference type="EC" id="3.5.1.28"/>
    </reaction>
</comment>
<comment type="subcellular location">
    <subcellularLocation>
        <location evidence="1">Periplasm</location>
    </subcellularLocation>
</comment>
<comment type="PTM">
    <text>Predicted to be exported by the Tat system. The position of the signal peptide cleavage has not been experimentally proven.</text>
</comment>
<comment type="similarity">
    <text evidence="4">Belongs to the N-acetylmuramoyl-L-alanine amidase 3 family.</text>
</comment>
<keyword id="KW-0961">Cell wall biogenesis/degradation</keyword>
<keyword id="KW-0378">Hydrolase</keyword>
<keyword id="KW-0574">Periplasm</keyword>
<keyword id="KW-1185">Reference proteome</keyword>
<keyword id="KW-0732">Signal</keyword>
<accession>P33772</accession>